<feature type="chain" id="PRO_0000129623" description="Large ribosomal subunit protein uL2">
    <location>
        <begin position="1"/>
        <end position="277"/>
    </location>
</feature>
<feature type="region of interest" description="Disordered" evidence="2">
    <location>
        <begin position="34"/>
        <end position="55"/>
    </location>
</feature>
<feature type="region of interest" description="Disordered" evidence="2">
    <location>
        <begin position="213"/>
        <end position="277"/>
    </location>
</feature>
<sequence>MALKKYKPITNGRRNMTSLDFAEITKSTPEKSLLQPLPKKAGRNNQGKLTVRHHGGGHKRQYRVIDFKRNKDGITAKVDSIQYDPNRSANIALLVYADGEKRYIIAPKGLQVGQVVESGADADIKVGNALPLQNIPVGTVIHNIELKPGKGGQLARSAGASSQVLGKEGKYVLIRLRSGEVRMILSTCRATIGQVGNLQHELVNVGKAGRSRWKGIRPTVRGSVMNPNDHPHGGGEGRAPIGRPSPMSPWGKPTLGKKTRRGKKSSDKLIVRGRKKK</sequence>
<dbReference type="EMBL" id="AP006716">
    <property type="protein sequence ID" value="BAE04114.1"/>
    <property type="molecule type" value="Genomic_DNA"/>
</dbReference>
<dbReference type="RefSeq" id="WP_011275128.1">
    <property type="nucleotide sequence ID" value="NC_007168.1"/>
</dbReference>
<dbReference type="SMR" id="Q4L8B1"/>
<dbReference type="GeneID" id="93780194"/>
<dbReference type="KEGG" id="sha:SH0805"/>
<dbReference type="eggNOG" id="COG0090">
    <property type="taxonomic scope" value="Bacteria"/>
</dbReference>
<dbReference type="HOGENOM" id="CLU_036235_2_1_9"/>
<dbReference type="OrthoDB" id="9778722at2"/>
<dbReference type="Proteomes" id="UP000000543">
    <property type="component" value="Chromosome"/>
</dbReference>
<dbReference type="GO" id="GO:0015934">
    <property type="term" value="C:large ribosomal subunit"/>
    <property type="evidence" value="ECO:0007669"/>
    <property type="project" value="InterPro"/>
</dbReference>
<dbReference type="GO" id="GO:0019843">
    <property type="term" value="F:rRNA binding"/>
    <property type="evidence" value="ECO:0007669"/>
    <property type="project" value="UniProtKB-UniRule"/>
</dbReference>
<dbReference type="GO" id="GO:0003735">
    <property type="term" value="F:structural constituent of ribosome"/>
    <property type="evidence" value="ECO:0007669"/>
    <property type="project" value="InterPro"/>
</dbReference>
<dbReference type="GO" id="GO:0016740">
    <property type="term" value="F:transferase activity"/>
    <property type="evidence" value="ECO:0007669"/>
    <property type="project" value="InterPro"/>
</dbReference>
<dbReference type="GO" id="GO:0002181">
    <property type="term" value="P:cytoplasmic translation"/>
    <property type="evidence" value="ECO:0007669"/>
    <property type="project" value="TreeGrafter"/>
</dbReference>
<dbReference type="FunFam" id="2.30.30.30:FF:000001">
    <property type="entry name" value="50S ribosomal protein L2"/>
    <property type="match status" value="1"/>
</dbReference>
<dbReference type="FunFam" id="2.40.50.140:FF:000003">
    <property type="entry name" value="50S ribosomal protein L2"/>
    <property type="match status" value="1"/>
</dbReference>
<dbReference type="FunFam" id="4.10.950.10:FF:000001">
    <property type="entry name" value="50S ribosomal protein L2"/>
    <property type="match status" value="1"/>
</dbReference>
<dbReference type="Gene3D" id="2.30.30.30">
    <property type="match status" value="1"/>
</dbReference>
<dbReference type="Gene3D" id="2.40.50.140">
    <property type="entry name" value="Nucleic acid-binding proteins"/>
    <property type="match status" value="1"/>
</dbReference>
<dbReference type="Gene3D" id="4.10.950.10">
    <property type="entry name" value="Ribosomal protein L2, domain 3"/>
    <property type="match status" value="1"/>
</dbReference>
<dbReference type="HAMAP" id="MF_01320_B">
    <property type="entry name" value="Ribosomal_uL2_B"/>
    <property type="match status" value="1"/>
</dbReference>
<dbReference type="InterPro" id="IPR012340">
    <property type="entry name" value="NA-bd_OB-fold"/>
</dbReference>
<dbReference type="InterPro" id="IPR014722">
    <property type="entry name" value="Rib_uL2_dom2"/>
</dbReference>
<dbReference type="InterPro" id="IPR002171">
    <property type="entry name" value="Ribosomal_uL2"/>
</dbReference>
<dbReference type="InterPro" id="IPR005880">
    <property type="entry name" value="Ribosomal_uL2_bac/org-type"/>
</dbReference>
<dbReference type="InterPro" id="IPR022669">
    <property type="entry name" value="Ribosomal_uL2_C"/>
</dbReference>
<dbReference type="InterPro" id="IPR022671">
    <property type="entry name" value="Ribosomal_uL2_CS"/>
</dbReference>
<dbReference type="InterPro" id="IPR014726">
    <property type="entry name" value="Ribosomal_uL2_dom3"/>
</dbReference>
<dbReference type="InterPro" id="IPR022666">
    <property type="entry name" value="Ribosomal_uL2_RNA-bd_dom"/>
</dbReference>
<dbReference type="InterPro" id="IPR008991">
    <property type="entry name" value="Translation_prot_SH3-like_sf"/>
</dbReference>
<dbReference type="NCBIfam" id="TIGR01171">
    <property type="entry name" value="rplB_bact"/>
    <property type="match status" value="1"/>
</dbReference>
<dbReference type="PANTHER" id="PTHR13691:SF5">
    <property type="entry name" value="LARGE RIBOSOMAL SUBUNIT PROTEIN UL2M"/>
    <property type="match status" value="1"/>
</dbReference>
<dbReference type="PANTHER" id="PTHR13691">
    <property type="entry name" value="RIBOSOMAL PROTEIN L2"/>
    <property type="match status" value="1"/>
</dbReference>
<dbReference type="Pfam" id="PF00181">
    <property type="entry name" value="Ribosomal_L2"/>
    <property type="match status" value="1"/>
</dbReference>
<dbReference type="Pfam" id="PF03947">
    <property type="entry name" value="Ribosomal_L2_C"/>
    <property type="match status" value="1"/>
</dbReference>
<dbReference type="PIRSF" id="PIRSF002158">
    <property type="entry name" value="Ribosomal_L2"/>
    <property type="match status" value="1"/>
</dbReference>
<dbReference type="SMART" id="SM01383">
    <property type="entry name" value="Ribosomal_L2"/>
    <property type="match status" value="1"/>
</dbReference>
<dbReference type="SMART" id="SM01382">
    <property type="entry name" value="Ribosomal_L2_C"/>
    <property type="match status" value="1"/>
</dbReference>
<dbReference type="SUPFAM" id="SSF50249">
    <property type="entry name" value="Nucleic acid-binding proteins"/>
    <property type="match status" value="1"/>
</dbReference>
<dbReference type="SUPFAM" id="SSF50104">
    <property type="entry name" value="Translation proteins SH3-like domain"/>
    <property type="match status" value="1"/>
</dbReference>
<dbReference type="PROSITE" id="PS00467">
    <property type="entry name" value="RIBOSOMAL_L2"/>
    <property type="match status" value="1"/>
</dbReference>
<comment type="function">
    <text evidence="1">One of the primary rRNA binding proteins. Required for association of the 30S and 50S subunits to form the 70S ribosome, for tRNA binding and peptide bond formation. It has been suggested to have peptidyltransferase activity; this is somewhat controversial. Makes several contacts with the 16S rRNA in the 70S ribosome.</text>
</comment>
<comment type="subunit">
    <text evidence="1">Part of the 50S ribosomal subunit. Forms a bridge to the 30S subunit in the 70S ribosome.</text>
</comment>
<comment type="similarity">
    <text evidence="1">Belongs to the universal ribosomal protein uL2 family.</text>
</comment>
<protein>
    <recommendedName>
        <fullName evidence="1">Large ribosomal subunit protein uL2</fullName>
    </recommendedName>
    <alternativeName>
        <fullName evidence="3">50S ribosomal protein L2</fullName>
    </alternativeName>
</protein>
<organism>
    <name type="scientific">Staphylococcus haemolyticus (strain JCSC1435)</name>
    <dbReference type="NCBI Taxonomy" id="279808"/>
    <lineage>
        <taxon>Bacteria</taxon>
        <taxon>Bacillati</taxon>
        <taxon>Bacillota</taxon>
        <taxon>Bacilli</taxon>
        <taxon>Bacillales</taxon>
        <taxon>Staphylococcaceae</taxon>
        <taxon>Staphylococcus</taxon>
    </lineage>
</organism>
<accession>Q4L8B1</accession>
<keyword id="KW-0687">Ribonucleoprotein</keyword>
<keyword id="KW-0689">Ribosomal protein</keyword>
<keyword id="KW-0694">RNA-binding</keyword>
<keyword id="KW-0699">rRNA-binding</keyword>
<proteinExistence type="inferred from homology"/>
<reference key="1">
    <citation type="journal article" date="2005" name="J. Bacteriol.">
        <title>Whole-genome sequencing of Staphylococcus haemolyticus uncovers the extreme plasticity of its genome and the evolution of human-colonizing staphylococcal species.</title>
        <authorList>
            <person name="Takeuchi F."/>
            <person name="Watanabe S."/>
            <person name="Baba T."/>
            <person name="Yuzawa H."/>
            <person name="Ito T."/>
            <person name="Morimoto Y."/>
            <person name="Kuroda M."/>
            <person name="Cui L."/>
            <person name="Takahashi M."/>
            <person name="Ankai A."/>
            <person name="Baba S."/>
            <person name="Fukui S."/>
            <person name="Lee J.C."/>
            <person name="Hiramatsu K."/>
        </authorList>
    </citation>
    <scope>NUCLEOTIDE SEQUENCE [LARGE SCALE GENOMIC DNA]</scope>
    <source>
        <strain>JCSC1435</strain>
    </source>
</reference>
<name>RL2_STAHJ</name>
<gene>
    <name evidence="1" type="primary">rplB</name>
    <name type="ordered locus">SH0805</name>
</gene>
<evidence type="ECO:0000255" key="1">
    <source>
        <dbReference type="HAMAP-Rule" id="MF_01320"/>
    </source>
</evidence>
<evidence type="ECO:0000256" key="2">
    <source>
        <dbReference type="SAM" id="MobiDB-lite"/>
    </source>
</evidence>
<evidence type="ECO:0000305" key="3"/>